<sequence length="445" mass="47929">MKQRQFFGTDGIRGKVGAGKMTPELALKLGWAAGRVLSRSGTQKVIIGKDTRISGYLFESALEAGLSAAGLDVMLIGPMPTPAVAYLTRTFRAEAGIVISASHNPYYDNGIKFFANDGSKLDDEVELEIEAELDKPLTCVESHELGKVVRIDDAAGRYIEYCKGHFPAEQTLSGLKIVVDCAHGATYHIAPSVFKELGAEVIAIGDKPNGLNINDKVGATSMGQICETVLAENADLGIALDGDGDRIMMVNRHGRVIDGDEILYILACDAQKRGVLRGGVVGTLMSNLGLDLALQALDIPFVRSKVGDRYVMELLKEHDWRIGGENSGHILNLDHGTTGDGIVAGILVLAAMQRQNATLEELTADIKMLPQVLVNVRFEGDNDPLVSEIVLAAKAEVEQKLGARGRVLLRKSGTEPLLRVMVEGDEQEAVTEYAHYIADAVRNLV</sequence>
<gene>
    <name evidence="1" type="primary">glmM</name>
    <name type="ordered locus">Shal_3152</name>
</gene>
<organism>
    <name type="scientific">Shewanella halifaxensis (strain HAW-EB4)</name>
    <dbReference type="NCBI Taxonomy" id="458817"/>
    <lineage>
        <taxon>Bacteria</taxon>
        <taxon>Pseudomonadati</taxon>
        <taxon>Pseudomonadota</taxon>
        <taxon>Gammaproteobacteria</taxon>
        <taxon>Alteromonadales</taxon>
        <taxon>Shewanellaceae</taxon>
        <taxon>Shewanella</taxon>
    </lineage>
</organism>
<name>GLMM_SHEHH</name>
<accession>B0TQA7</accession>
<feature type="chain" id="PRO_1000087777" description="Phosphoglucosamine mutase">
    <location>
        <begin position="1"/>
        <end position="445"/>
    </location>
</feature>
<feature type="active site" description="Phosphoserine intermediate" evidence="1">
    <location>
        <position position="102"/>
    </location>
</feature>
<feature type="binding site" description="via phosphate group" evidence="1">
    <location>
        <position position="102"/>
    </location>
    <ligand>
        <name>Mg(2+)</name>
        <dbReference type="ChEBI" id="CHEBI:18420"/>
    </ligand>
</feature>
<feature type="binding site" evidence="1">
    <location>
        <position position="241"/>
    </location>
    <ligand>
        <name>Mg(2+)</name>
        <dbReference type="ChEBI" id="CHEBI:18420"/>
    </ligand>
</feature>
<feature type="binding site" evidence="1">
    <location>
        <position position="243"/>
    </location>
    <ligand>
        <name>Mg(2+)</name>
        <dbReference type="ChEBI" id="CHEBI:18420"/>
    </ligand>
</feature>
<feature type="binding site" evidence="1">
    <location>
        <position position="245"/>
    </location>
    <ligand>
        <name>Mg(2+)</name>
        <dbReference type="ChEBI" id="CHEBI:18420"/>
    </ligand>
</feature>
<feature type="modified residue" description="Phosphoserine" evidence="1">
    <location>
        <position position="102"/>
    </location>
</feature>
<protein>
    <recommendedName>
        <fullName evidence="1">Phosphoglucosamine mutase</fullName>
        <ecNumber evidence="1">5.4.2.10</ecNumber>
    </recommendedName>
</protein>
<keyword id="KW-0413">Isomerase</keyword>
<keyword id="KW-0460">Magnesium</keyword>
<keyword id="KW-0479">Metal-binding</keyword>
<keyword id="KW-0597">Phosphoprotein</keyword>
<proteinExistence type="inferred from homology"/>
<reference key="1">
    <citation type="submission" date="2008-01" db="EMBL/GenBank/DDBJ databases">
        <title>Complete sequence of Shewanella halifaxensis HAW-EB4.</title>
        <authorList>
            <consortium name="US DOE Joint Genome Institute"/>
            <person name="Copeland A."/>
            <person name="Lucas S."/>
            <person name="Lapidus A."/>
            <person name="Glavina del Rio T."/>
            <person name="Dalin E."/>
            <person name="Tice H."/>
            <person name="Bruce D."/>
            <person name="Goodwin L."/>
            <person name="Pitluck S."/>
            <person name="Sims D."/>
            <person name="Brettin T."/>
            <person name="Detter J.C."/>
            <person name="Han C."/>
            <person name="Kuske C.R."/>
            <person name="Schmutz J."/>
            <person name="Larimer F."/>
            <person name="Land M."/>
            <person name="Hauser L."/>
            <person name="Kyrpides N."/>
            <person name="Kim E."/>
            <person name="Zhao J.-S."/>
            <person name="Richardson P."/>
        </authorList>
    </citation>
    <scope>NUCLEOTIDE SEQUENCE [LARGE SCALE GENOMIC DNA]</scope>
    <source>
        <strain>HAW-EB4</strain>
    </source>
</reference>
<comment type="function">
    <text evidence="1">Catalyzes the conversion of glucosamine-6-phosphate to glucosamine-1-phosphate.</text>
</comment>
<comment type="catalytic activity">
    <reaction evidence="1">
        <text>alpha-D-glucosamine 1-phosphate = D-glucosamine 6-phosphate</text>
        <dbReference type="Rhea" id="RHEA:23424"/>
        <dbReference type="ChEBI" id="CHEBI:58516"/>
        <dbReference type="ChEBI" id="CHEBI:58725"/>
        <dbReference type="EC" id="5.4.2.10"/>
    </reaction>
</comment>
<comment type="cofactor">
    <cofactor evidence="1">
        <name>Mg(2+)</name>
        <dbReference type="ChEBI" id="CHEBI:18420"/>
    </cofactor>
    <text evidence="1">Binds 1 Mg(2+) ion per subunit.</text>
</comment>
<comment type="PTM">
    <text evidence="1">Activated by phosphorylation.</text>
</comment>
<comment type="similarity">
    <text evidence="1">Belongs to the phosphohexose mutase family.</text>
</comment>
<dbReference type="EC" id="5.4.2.10" evidence="1"/>
<dbReference type="EMBL" id="CP000931">
    <property type="protein sequence ID" value="ABZ77699.1"/>
    <property type="molecule type" value="Genomic_DNA"/>
</dbReference>
<dbReference type="RefSeq" id="WP_012278223.1">
    <property type="nucleotide sequence ID" value="NC_010334.1"/>
</dbReference>
<dbReference type="SMR" id="B0TQA7"/>
<dbReference type="STRING" id="458817.Shal_3152"/>
<dbReference type="KEGG" id="shl:Shal_3152"/>
<dbReference type="eggNOG" id="COG1109">
    <property type="taxonomic scope" value="Bacteria"/>
</dbReference>
<dbReference type="HOGENOM" id="CLU_016950_7_0_6"/>
<dbReference type="OrthoDB" id="9803322at2"/>
<dbReference type="Proteomes" id="UP000001317">
    <property type="component" value="Chromosome"/>
</dbReference>
<dbReference type="GO" id="GO:0005829">
    <property type="term" value="C:cytosol"/>
    <property type="evidence" value="ECO:0007669"/>
    <property type="project" value="TreeGrafter"/>
</dbReference>
<dbReference type="GO" id="GO:0000287">
    <property type="term" value="F:magnesium ion binding"/>
    <property type="evidence" value="ECO:0007669"/>
    <property type="project" value="UniProtKB-UniRule"/>
</dbReference>
<dbReference type="GO" id="GO:0008966">
    <property type="term" value="F:phosphoglucosamine mutase activity"/>
    <property type="evidence" value="ECO:0007669"/>
    <property type="project" value="UniProtKB-UniRule"/>
</dbReference>
<dbReference type="GO" id="GO:0004615">
    <property type="term" value="F:phosphomannomutase activity"/>
    <property type="evidence" value="ECO:0007669"/>
    <property type="project" value="TreeGrafter"/>
</dbReference>
<dbReference type="GO" id="GO:0005975">
    <property type="term" value="P:carbohydrate metabolic process"/>
    <property type="evidence" value="ECO:0007669"/>
    <property type="project" value="InterPro"/>
</dbReference>
<dbReference type="GO" id="GO:0009252">
    <property type="term" value="P:peptidoglycan biosynthetic process"/>
    <property type="evidence" value="ECO:0007669"/>
    <property type="project" value="TreeGrafter"/>
</dbReference>
<dbReference type="GO" id="GO:0006048">
    <property type="term" value="P:UDP-N-acetylglucosamine biosynthetic process"/>
    <property type="evidence" value="ECO:0007669"/>
    <property type="project" value="TreeGrafter"/>
</dbReference>
<dbReference type="CDD" id="cd05802">
    <property type="entry name" value="GlmM"/>
    <property type="match status" value="1"/>
</dbReference>
<dbReference type="FunFam" id="3.30.310.50:FF:000001">
    <property type="entry name" value="Phosphoglucosamine mutase"/>
    <property type="match status" value="1"/>
</dbReference>
<dbReference type="FunFam" id="3.40.120.10:FF:000001">
    <property type="entry name" value="Phosphoglucosamine mutase"/>
    <property type="match status" value="1"/>
</dbReference>
<dbReference type="FunFam" id="3.40.120.10:FF:000003">
    <property type="entry name" value="Phosphoglucosamine mutase"/>
    <property type="match status" value="1"/>
</dbReference>
<dbReference type="Gene3D" id="3.40.120.10">
    <property type="entry name" value="Alpha-D-Glucose-1,6-Bisphosphate, subunit A, domain 3"/>
    <property type="match status" value="3"/>
</dbReference>
<dbReference type="Gene3D" id="3.30.310.50">
    <property type="entry name" value="Alpha-D-phosphohexomutase, C-terminal domain"/>
    <property type="match status" value="1"/>
</dbReference>
<dbReference type="HAMAP" id="MF_01554_B">
    <property type="entry name" value="GlmM_B"/>
    <property type="match status" value="1"/>
</dbReference>
<dbReference type="InterPro" id="IPR005844">
    <property type="entry name" value="A-D-PHexomutase_a/b/a-I"/>
</dbReference>
<dbReference type="InterPro" id="IPR016055">
    <property type="entry name" value="A-D-PHexomutase_a/b/a-I/II/III"/>
</dbReference>
<dbReference type="InterPro" id="IPR005845">
    <property type="entry name" value="A-D-PHexomutase_a/b/a-II"/>
</dbReference>
<dbReference type="InterPro" id="IPR005846">
    <property type="entry name" value="A-D-PHexomutase_a/b/a-III"/>
</dbReference>
<dbReference type="InterPro" id="IPR005843">
    <property type="entry name" value="A-D-PHexomutase_C"/>
</dbReference>
<dbReference type="InterPro" id="IPR036900">
    <property type="entry name" value="A-D-PHexomutase_C_sf"/>
</dbReference>
<dbReference type="InterPro" id="IPR016066">
    <property type="entry name" value="A-D-PHexomutase_CS"/>
</dbReference>
<dbReference type="InterPro" id="IPR005841">
    <property type="entry name" value="Alpha-D-phosphohexomutase_SF"/>
</dbReference>
<dbReference type="InterPro" id="IPR006352">
    <property type="entry name" value="GlmM_bact"/>
</dbReference>
<dbReference type="InterPro" id="IPR050060">
    <property type="entry name" value="Phosphoglucosamine_mutase"/>
</dbReference>
<dbReference type="NCBIfam" id="TIGR01455">
    <property type="entry name" value="glmM"/>
    <property type="match status" value="1"/>
</dbReference>
<dbReference type="NCBIfam" id="NF008139">
    <property type="entry name" value="PRK10887.1"/>
    <property type="match status" value="1"/>
</dbReference>
<dbReference type="PANTHER" id="PTHR42946:SF1">
    <property type="entry name" value="PHOSPHOGLUCOMUTASE (ALPHA-D-GLUCOSE-1,6-BISPHOSPHATE-DEPENDENT)"/>
    <property type="match status" value="1"/>
</dbReference>
<dbReference type="PANTHER" id="PTHR42946">
    <property type="entry name" value="PHOSPHOHEXOSE MUTASE"/>
    <property type="match status" value="1"/>
</dbReference>
<dbReference type="Pfam" id="PF02878">
    <property type="entry name" value="PGM_PMM_I"/>
    <property type="match status" value="1"/>
</dbReference>
<dbReference type="Pfam" id="PF02879">
    <property type="entry name" value="PGM_PMM_II"/>
    <property type="match status" value="1"/>
</dbReference>
<dbReference type="Pfam" id="PF02880">
    <property type="entry name" value="PGM_PMM_III"/>
    <property type="match status" value="1"/>
</dbReference>
<dbReference type="Pfam" id="PF00408">
    <property type="entry name" value="PGM_PMM_IV"/>
    <property type="match status" value="1"/>
</dbReference>
<dbReference type="PRINTS" id="PR00509">
    <property type="entry name" value="PGMPMM"/>
</dbReference>
<dbReference type="SUPFAM" id="SSF55957">
    <property type="entry name" value="Phosphoglucomutase, C-terminal domain"/>
    <property type="match status" value="1"/>
</dbReference>
<dbReference type="SUPFAM" id="SSF53738">
    <property type="entry name" value="Phosphoglucomutase, first 3 domains"/>
    <property type="match status" value="3"/>
</dbReference>
<dbReference type="PROSITE" id="PS00710">
    <property type="entry name" value="PGM_PMM"/>
    <property type="match status" value="1"/>
</dbReference>
<evidence type="ECO:0000255" key="1">
    <source>
        <dbReference type="HAMAP-Rule" id="MF_01554"/>
    </source>
</evidence>